<comment type="function">
    <text evidence="1">Escorts unspliced or incompletely spliced viral pre-mRNAs (late transcripts) out of the nucleus of infected cells. These pre-mRNAs carry a recognition sequence called Rev responsive element (RRE) located in the env gene, that is not present in fully spliced viral mRNAs (early transcripts). This function is essential since most viral proteins are translated from unspliced or partially spliced pre-mRNAs which cannot exit the nucleus by the pathway used by fully processed cellular mRNAs. Rev itself is translated from a fully spliced mRNA that readily exits the nucleus. Rev's nuclear localization signal (NLS) binds directly to KPNB1/Importin beta-1 without previous binding to KPNA1/Importin alpha-1. KPNB1 binds to the GDP bound form of RAN (Ran-GDP) and targets Rev to the nucleus. In the nucleus, the conversion from Ran-GDP to Ran-GTP dissociates Rev from KPNB1 and allows Rev's binding to the RRE in viral pre-mRNAs. Rev multimerization on the RRE via cooperative assembly exposes its nuclear export signal (NES) to the surface. Rev can then form a complex with XPO1/CRM1 and Ran-GTP, leading to nuclear export of the complex. Conversion from Ran-GTP to Ran-GDP mediates dissociation of the Rev/RRE/XPO1/RAN complex, so that Rev can return to the nucleus for a subsequent round of export. Beside KPNB1, also seems to interact with TNPO1/Transportin-1, RANBP5/IPO5 and IPO7/RANBP7 for nuclear import. The nucleoporin-like HRB/RIP is an essential cofactor that probably indirectly interacts with Rev to release HIV RNAs from the perinuclear region to the cytoplasm.</text>
</comment>
<comment type="subunit">
    <text evidence="1">Homomultimer; when bound to the RRE. Multimeric assembly is essential for activity and may involve XPO1. Binds to human KPNB1, XPO1, TNPO1, RANBP5 and IPO7. Interacts with the viral Integrase. Interacts with human KHDRBS1. Interacts with human NAP1; this interaction decreases Rev multimerization and stimulates its activity. Interacts with human DEAD-box helicases DDX3 and DDX24; these interactions may serve for viral RNA export to the cytoplasm and packaging, respectively. Interacts with human PSIP1; this interaction may inhibit HIV-1 DNA integration by promoting dissociation of the Integrase-LEDGF/p75 complex.</text>
</comment>
<comment type="subcellular location">
    <subcellularLocation>
        <location evidence="1">Host nucleus</location>
        <location evidence="1">Host nucleolus</location>
    </subcellularLocation>
    <subcellularLocation>
        <location evidence="1">Host cytoplasm</location>
    </subcellularLocation>
    <text evidence="1">The presence of both nuclear import and nuclear export signals leads to continuous shuttling between the nucleus and cytoplasm.</text>
</comment>
<comment type="domain">
    <text evidence="1">The RNA-binding motif binds to the RRE, a 240 bp stem-and-loop structure present in incompletely spliced viral pre-mRNAs. This region also contains the NLS which mediates nuclear localization via KPNB1 binding and, when the N-terminal sequence is present, nucleolar targeting. These overlapping functions prevent Rev bound to RRE from undesirable return to the nucleus. When Rev binds the RRE, the NLS becomes masked while the NES remains accessible. The leucine-rich NES mediates binding to human XPO1.</text>
</comment>
<comment type="PTM">
    <text evidence="1">Asymmetrically arginine dimethylated at one site by host PRMT6. Methylation impairs the RNA-binding activity and export of viral RNA from the nucleus to the cytoplasm.</text>
</comment>
<comment type="PTM">
    <text evidence="1">Phosphorylated by protein kinase CK2. Presence of, and maybe binding to the N-terminus of the regulatory beta subunit of CK2 is necessary for CK2-mediated Rev's phosphorylation.</text>
</comment>
<comment type="miscellaneous">
    <text evidence="1">HIV-1 lineages are divided in three main groups, M (for Major), O (for Outlier), and N (for New, or Non-M, Non-O). The vast majority of strains found worldwide belong to the group M. Group O seems to be endemic to and largely confined to Cameroon and neighboring countries in West Central Africa, where these viruses represent a small minority of HIV-1 strains. The group N is represented by a limited number of isolates from Cameroonian persons. The group M is further subdivided in 9 clades or subtypes (A to D, F to H, J and K).</text>
</comment>
<comment type="similarity">
    <text evidence="1">Belongs to the HIV-1 REV protein family.</text>
</comment>
<sequence>MAGRSGDSDEDLLKTVRLIKFLYQSNPPPSLEGTRQARRNRRRRWRERQRQIRSISERILGTFLGRFEEPVPLPLPPLEKLTLDCNEDCGTSGTQGVGSPQILVESPAILEPGTKE</sequence>
<organism>
    <name type="scientific">Human immunodeficiency virus type 1 group M subtype B (strain 89.6)</name>
    <name type="common">HIV-1</name>
    <dbReference type="NCBI Taxonomy" id="401671"/>
    <lineage>
        <taxon>Viruses</taxon>
        <taxon>Riboviria</taxon>
        <taxon>Pararnavirae</taxon>
        <taxon>Artverviricota</taxon>
        <taxon>Revtraviricetes</taxon>
        <taxon>Ortervirales</taxon>
        <taxon>Retroviridae</taxon>
        <taxon>Orthoretrovirinae</taxon>
        <taxon>Lentivirus</taxon>
        <taxon>Human immunodeficiency virus type 1</taxon>
    </lineage>
</organism>
<accession>Q73371</accession>
<name>REV_HV1B9</name>
<organismHost>
    <name type="scientific">Homo sapiens</name>
    <name type="common">Human</name>
    <dbReference type="NCBI Taxonomy" id="9606"/>
</organismHost>
<dbReference type="EMBL" id="U39362">
    <property type="protein sequence ID" value="AAA81041.1"/>
    <property type="status" value="ALT_SEQ"/>
    <property type="molecule type" value="Genomic_DNA"/>
</dbReference>
<dbReference type="Proteomes" id="UP000007691">
    <property type="component" value="Genome"/>
</dbReference>
<dbReference type="GO" id="GO:0030430">
    <property type="term" value="C:host cell cytoplasm"/>
    <property type="evidence" value="ECO:0007669"/>
    <property type="project" value="UniProtKB-SubCell"/>
</dbReference>
<dbReference type="GO" id="GO:0044196">
    <property type="term" value="C:host cell nucleolus"/>
    <property type="evidence" value="ECO:0007669"/>
    <property type="project" value="UniProtKB-SubCell"/>
</dbReference>
<dbReference type="GO" id="GO:0003700">
    <property type="term" value="F:DNA-binding transcription factor activity"/>
    <property type="evidence" value="ECO:0007669"/>
    <property type="project" value="UniProtKB-UniRule"/>
</dbReference>
<dbReference type="GO" id="GO:0003723">
    <property type="term" value="F:RNA binding"/>
    <property type="evidence" value="ECO:0007669"/>
    <property type="project" value="UniProtKB-UniRule"/>
</dbReference>
<dbReference type="GO" id="GO:0051028">
    <property type="term" value="P:mRNA transport"/>
    <property type="evidence" value="ECO:0007669"/>
    <property type="project" value="UniProtKB-UniRule"/>
</dbReference>
<dbReference type="GO" id="GO:0016032">
    <property type="term" value="P:viral process"/>
    <property type="evidence" value="ECO:0007669"/>
    <property type="project" value="UniProtKB-UniRule"/>
</dbReference>
<dbReference type="Gene3D" id="6.10.140.630">
    <property type="match status" value="1"/>
</dbReference>
<dbReference type="HAMAP" id="MF_04077">
    <property type="entry name" value="REV_HIV1"/>
    <property type="match status" value="1"/>
</dbReference>
<dbReference type="InterPro" id="IPR000625">
    <property type="entry name" value="REV_protein"/>
</dbReference>
<dbReference type="Pfam" id="PF00424">
    <property type="entry name" value="REV"/>
    <property type="match status" value="1"/>
</dbReference>
<proteinExistence type="inferred from homology"/>
<feature type="chain" id="PRO_0000253571" description="Protein Rev">
    <location>
        <begin position="1"/>
        <end position="116"/>
    </location>
</feature>
<feature type="region of interest" description="Homomultimerization" evidence="1">
    <location>
        <begin position="18"/>
        <end position="26"/>
    </location>
</feature>
<feature type="region of interest" description="Disordered" evidence="2">
    <location>
        <begin position="25"/>
        <end position="49"/>
    </location>
</feature>
<feature type="region of interest" description="Disordered" evidence="2">
    <location>
        <begin position="92"/>
        <end position="116"/>
    </location>
</feature>
<feature type="short sequence motif" description="Nuclear localization signal and RNA-binding (RRE)" evidence="1">
    <location>
        <begin position="34"/>
        <end position="50"/>
    </location>
</feature>
<feature type="short sequence motif" description="Nuclear export signal and binding to XPO1" evidence="1">
    <location>
        <begin position="73"/>
        <end position="84"/>
    </location>
</feature>
<feature type="compositionally biased region" description="Basic residues" evidence="2">
    <location>
        <begin position="36"/>
        <end position="47"/>
    </location>
</feature>
<feature type="modified residue" description="Phosphoserine; by host CK2" evidence="1">
    <location>
        <position position="5"/>
    </location>
</feature>
<feature type="modified residue" description="Phosphoserine; by host CK2" evidence="1">
    <location>
        <position position="8"/>
    </location>
</feature>
<feature type="modified residue" description="Phosphoserine; by host" evidence="1">
    <location>
        <position position="92"/>
    </location>
</feature>
<feature type="modified residue" description="Phosphoserine; by host" evidence="1">
    <location>
        <position position="99"/>
    </location>
</feature>
<keyword id="KW-0014">AIDS</keyword>
<keyword id="KW-1035">Host cytoplasm</keyword>
<keyword id="KW-1048">Host nucleus</keyword>
<keyword id="KW-0945">Host-virus interaction</keyword>
<keyword id="KW-0488">Methylation</keyword>
<keyword id="KW-0509">mRNA transport</keyword>
<keyword id="KW-0597">Phosphoprotein</keyword>
<keyword id="KW-1185">Reference proteome</keyword>
<keyword id="KW-0694">RNA-binding</keyword>
<keyword id="KW-0813">Transport</keyword>
<protein>
    <recommendedName>
        <fullName evidence="1">Protein Rev</fullName>
    </recommendedName>
    <alternativeName>
        <fullName evidence="1">ART/TRS</fullName>
    </alternativeName>
    <alternativeName>
        <fullName evidence="1">Anti-repression transactivator</fullName>
    </alternativeName>
    <alternativeName>
        <fullName evidence="1">Regulator of expression of viral proteins</fullName>
    </alternativeName>
</protein>
<reference key="1">
    <citation type="journal article" date="1992" name="J. Virol.">
        <title>An infectious molecular clone of an unusual macrophage-tropic and highly cytopathic strain of human immunodeficiency virus type 1.</title>
        <authorList>
            <person name="Collman R."/>
            <person name="Balliet J.W."/>
            <person name="Gregory S.A."/>
            <person name="Friedman H."/>
            <person name="Kolson D.L."/>
            <person name="Nathanson N."/>
            <person name="Srinivasan A."/>
        </authorList>
    </citation>
    <scope>NUCLEOTIDE SEQUENCE [GENOMIC DNA]</scope>
</reference>
<evidence type="ECO:0000255" key="1">
    <source>
        <dbReference type="HAMAP-Rule" id="MF_04077"/>
    </source>
</evidence>
<evidence type="ECO:0000256" key="2">
    <source>
        <dbReference type="SAM" id="MobiDB-lite"/>
    </source>
</evidence>
<gene>
    <name evidence="1" type="primary">rev</name>
</gene>